<proteinExistence type="inferred from homology"/>
<comment type="function">
    <text evidence="1">Inclusion body (IB) resident protein that interacts strongly with lipid droplet (LD) proteins. Involved in LD-mediated IB clearing after protein folding stress, probably by enabling access to the IBs of an LD-stored soluble sterol derivative that acts as a chaperone in inclusion clearing.</text>
</comment>
<comment type="subunit">
    <text evidence="1">Interacts with lipid droplet proteins.</text>
</comment>
<comment type="subcellular location">
    <subcellularLocation>
        <location evidence="1">Cytoplasm</location>
    </subcellularLocation>
    <subcellularLocation>
        <location evidence="1">Nucleus</location>
    </subcellularLocation>
    <text evidence="1">Localized exclusively in cytoplasmic inclusion bodies under protein folding stress conditions.</text>
</comment>
<comment type="similarity">
    <text evidence="3">Belongs to the IML2 family.</text>
</comment>
<name>IML2_ASPNC</name>
<organism>
    <name type="scientific">Aspergillus niger (strain ATCC MYA-4892 / CBS 513.88 / FGSC A1513)</name>
    <dbReference type="NCBI Taxonomy" id="425011"/>
    <lineage>
        <taxon>Eukaryota</taxon>
        <taxon>Fungi</taxon>
        <taxon>Dikarya</taxon>
        <taxon>Ascomycota</taxon>
        <taxon>Pezizomycotina</taxon>
        <taxon>Eurotiomycetes</taxon>
        <taxon>Eurotiomycetidae</taxon>
        <taxon>Eurotiales</taxon>
        <taxon>Aspergillaceae</taxon>
        <taxon>Aspergillus</taxon>
        <taxon>Aspergillus subgen. Circumdati</taxon>
    </lineage>
</organism>
<feature type="chain" id="PRO_0000333342" description="Inclusion body clearance protein iml2">
    <location>
        <begin position="1"/>
        <end position="692"/>
    </location>
</feature>
<feature type="region of interest" description="Disordered" evidence="2">
    <location>
        <begin position="87"/>
        <end position="111"/>
    </location>
</feature>
<feature type="region of interest" description="Disordered" evidence="2">
    <location>
        <begin position="175"/>
        <end position="202"/>
    </location>
</feature>
<feature type="compositionally biased region" description="Polar residues" evidence="2">
    <location>
        <begin position="175"/>
        <end position="184"/>
    </location>
</feature>
<keyword id="KW-0963">Cytoplasm</keyword>
<keyword id="KW-0539">Nucleus</keyword>
<keyword id="KW-0597">Phosphoprotein</keyword>
<keyword id="KW-1185">Reference proteome</keyword>
<reference key="1">
    <citation type="journal article" date="2007" name="Nat. Biotechnol.">
        <title>Genome sequencing and analysis of the versatile cell factory Aspergillus niger CBS 513.88.</title>
        <authorList>
            <person name="Pel H.J."/>
            <person name="de Winde J.H."/>
            <person name="Archer D.B."/>
            <person name="Dyer P.S."/>
            <person name="Hofmann G."/>
            <person name="Schaap P.J."/>
            <person name="Turner G."/>
            <person name="de Vries R.P."/>
            <person name="Albang R."/>
            <person name="Albermann K."/>
            <person name="Andersen M.R."/>
            <person name="Bendtsen J.D."/>
            <person name="Benen J.A.E."/>
            <person name="van den Berg M."/>
            <person name="Breestraat S."/>
            <person name="Caddick M.X."/>
            <person name="Contreras R."/>
            <person name="Cornell M."/>
            <person name="Coutinho P.M."/>
            <person name="Danchin E.G.J."/>
            <person name="Debets A.J.M."/>
            <person name="Dekker P."/>
            <person name="van Dijck P.W.M."/>
            <person name="van Dijk A."/>
            <person name="Dijkhuizen L."/>
            <person name="Driessen A.J.M."/>
            <person name="d'Enfert C."/>
            <person name="Geysens S."/>
            <person name="Goosen C."/>
            <person name="Groot G.S.P."/>
            <person name="de Groot P.W.J."/>
            <person name="Guillemette T."/>
            <person name="Henrissat B."/>
            <person name="Herweijer M."/>
            <person name="van den Hombergh J.P.T.W."/>
            <person name="van den Hondel C.A.M.J.J."/>
            <person name="van der Heijden R.T.J.M."/>
            <person name="van der Kaaij R.M."/>
            <person name="Klis F.M."/>
            <person name="Kools H.J."/>
            <person name="Kubicek C.P."/>
            <person name="van Kuyk P.A."/>
            <person name="Lauber J."/>
            <person name="Lu X."/>
            <person name="van der Maarel M.J.E.C."/>
            <person name="Meulenberg R."/>
            <person name="Menke H."/>
            <person name="Mortimer M.A."/>
            <person name="Nielsen J."/>
            <person name="Oliver S.G."/>
            <person name="Olsthoorn M."/>
            <person name="Pal K."/>
            <person name="van Peij N.N.M.E."/>
            <person name="Ram A.F.J."/>
            <person name="Rinas U."/>
            <person name="Roubos J.A."/>
            <person name="Sagt C.M.J."/>
            <person name="Schmoll M."/>
            <person name="Sun J."/>
            <person name="Ussery D."/>
            <person name="Varga J."/>
            <person name="Vervecken W."/>
            <person name="van de Vondervoort P.J.J."/>
            <person name="Wedler H."/>
            <person name="Woesten H.A.B."/>
            <person name="Zeng A.-P."/>
            <person name="van Ooyen A.J.J."/>
            <person name="Visser J."/>
            <person name="Stam H."/>
        </authorList>
    </citation>
    <scope>NUCLEOTIDE SEQUENCE [LARGE SCALE GENOMIC DNA]</scope>
    <source>
        <strain>ATCC MYA-4892 / CBS 513.88 / FGSC A1513</strain>
    </source>
</reference>
<dbReference type="EMBL" id="AM270163">
    <property type="protein sequence ID" value="CAK45273.1"/>
    <property type="molecule type" value="Genomic_DNA"/>
</dbReference>
<dbReference type="RefSeq" id="XP_001392344.1">
    <property type="nucleotide sequence ID" value="XM_001392307.1"/>
</dbReference>
<dbReference type="EnsemblFungi" id="CAK45273">
    <property type="protein sequence ID" value="CAK45273"/>
    <property type="gene ID" value="An08g02280"/>
</dbReference>
<dbReference type="GeneID" id="4982541"/>
<dbReference type="KEGG" id="ang:An08g02280"/>
<dbReference type="VEuPathDB" id="FungiDB:An08g02280"/>
<dbReference type="HOGENOM" id="CLU_014926_1_0_1"/>
<dbReference type="Proteomes" id="UP000006706">
    <property type="component" value="Chromosome 8R"/>
</dbReference>
<dbReference type="GO" id="GO:0005829">
    <property type="term" value="C:cytosol"/>
    <property type="evidence" value="ECO:0007669"/>
    <property type="project" value="TreeGrafter"/>
</dbReference>
<dbReference type="GO" id="GO:0005741">
    <property type="term" value="C:mitochondrial outer membrane"/>
    <property type="evidence" value="ECO:0007669"/>
    <property type="project" value="TreeGrafter"/>
</dbReference>
<dbReference type="GO" id="GO:0005634">
    <property type="term" value="C:nucleus"/>
    <property type="evidence" value="ECO:0007669"/>
    <property type="project" value="UniProtKB-SubCell"/>
</dbReference>
<dbReference type="InterPro" id="IPR019412">
    <property type="entry name" value="Iml2/TPR_39"/>
</dbReference>
<dbReference type="PANTHER" id="PTHR31859">
    <property type="entry name" value="TETRATRICOPEPTIDE REPEAT PROTEIN 39 FAMILY MEMBER"/>
    <property type="match status" value="1"/>
</dbReference>
<dbReference type="PANTHER" id="PTHR31859:SF1">
    <property type="entry name" value="TETRATRICOPEPTIDE REPEAT PROTEIN 39C"/>
    <property type="match status" value="1"/>
</dbReference>
<dbReference type="Pfam" id="PF10300">
    <property type="entry name" value="Iml2-TPR_39"/>
    <property type="match status" value="1"/>
</dbReference>
<gene>
    <name type="primary">iml2</name>
    <name type="ORF">An08g02280</name>
</gene>
<evidence type="ECO:0000250" key="1">
    <source>
        <dbReference type="UniProtKB" id="P47031"/>
    </source>
</evidence>
<evidence type="ECO:0000256" key="2">
    <source>
        <dbReference type="SAM" id="MobiDB-lite"/>
    </source>
</evidence>
<evidence type="ECO:0000305" key="3"/>
<protein>
    <recommendedName>
        <fullName>Inclusion body clearance protein iml2</fullName>
    </recommendedName>
</protein>
<accession>A2QQE8</accession>
<sequence>MFRVGSWLYGKKPASTQSLDSLSELRDLEDAMRAATLILNDDVDGAEDGLSEGTSSFHNLGRGVVAFIRATLGFEQEIMRQASERLNAAETSAANDQHRAQHNSHAPNTYHSQIYAPGTEFALCQAMAQLMSAVVGVLNESLTESIKGFYRLRKAYITLDAILKMEQKFIMQARNSGNSTSTESLPRGAGQGAGSKSVPASPVEPIDLKKELSDLSISADSEASASGPSDMLSHDPDSDIFKNQIDVFVHSGANFCFGILLLLISMVPPAFSKLLGIIGFHGDKERGLRMLWQASKFHNLIGALAAFSILGYSNGFVRYCDIMPDPVPGDDVQGYPQERLEALLALMRKRFPKSQLWLLEESRMNGANKKLDVALELLCGEDRSPLKQVEALRVFERSLNAMYLHRYELCAESFLECVELNSWSRSLYYYIAGSAHLSLYRNIAGTDATAAAKHAEKAVEYFRKAPPLAGKKKFMARQLPFDVFVSRKIAKWEARAKEWKVPLVDAVGVDPIEEMIFFWNGHSRMTQEQLEESMTKLAWSESEANKTWSREGPEEKAILQLLRAAVLRAMRRHDEAKEMIRTSIFSQDKSQFTGHLKDDWIYPVAHFEMAANLWMERPTYSAIHGGPASSSEKPSTDSDMQLERRQVRECKEHLEKAAKWESYELDARVGLKVTAALEAVEKWESAHATTSG</sequence>